<sequence>MFTSVAQANAAVIEQIRRARPHWLDVQPASSLISELNEGKTLLHAGPPMRWQEMTGPMKGACVGACLFEGWAKDEAQALAILEQGEVNFIPCHHVNAVGPMGGITSASMPMLVVENVTDGNRAYCNLNEGIGKVMRFGAYGEDVLTRHRWMRDVLMPVLSAALGRMERGIDLTAMMAQGITMGDEFHQRNIASSALLMRALAPQIARLDHDKQHIAEVMDFLSVTDQFFLNLAMAYCKAAMDAGAMIRAGSIVTAMTRNGNMFGIRVSGLGERWFTAPVNTPQGLFFTGFSQEQANPDMGDSAITETFGIGGAAMIAAPGVTRFVGAGGMEAARAVSEEMAEIYLERNMQLQIPSWDFQGACLGLDIRRVVETGITPLINTGIAHKEAGIGQIGAGTVRAPLACFEQALEALAESMGIG</sequence>
<comment type="function">
    <text evidence="1">Component of a carbamoyltransferase involved in the anaerobic nitrogen utilization via the assimilation of allantoin (PubMed:38888336). Catalyzes the conversion of oxalurate (N-carbamoyl-2-oxoglycine) to oxamate and carbamoyl phosphate (PubMed:38888336).</text>
</comment>
<comment type="catalytic activity">
    <reaction evidence="1">
        <text>oxamate + carbamoyl phosphate = N-carbamoyl-2-oxoglycine + phosphate</text>
        <dbReference type="Rhea" id="RHEA:22984"/>
        <dbReference type="ChEBI" id="CHEBI:43474"/>
        <dbReference type="ChEBI" id="CHEBI:57824"/>
        <dbReference type="ChEBI" id="CHEBI:58228"/>
        <dbReference type="ChEBI" id="CHEBI:58363"/>
        <dbReference type="EC" id="2.1.3.5"/>
    </reaction>
    <physiologicalReaction direction="right-to-left" evidence="4">
        <dbReference type="Rhea" id="RHEA:22986"/>
    </physiologicalReaction>
</comment>
<comment type="cofactor">
    <cofactor evidence="1">
        <name>Mg(2+)</name>
        <dbReference type="ChEBI" id="CHEBI:18420"/>
    </cofactor>
</comment>
<comment type="biophysicochemical properties">
    <kinetics>
        <KM evidence="1">36.9 mM for oxamate</KM>
        <KM evidence="1">1.3 mM for carbamoyl phosphate</KM>
        <Vmax evidence="1">27.0 umol/min/mg enzyme toward oxamate</Vmax>
        <Vmax evidence="1">15.4 umol/min/mg enzyme toward carbamoyl phosphate</Vmax>
        <text evidence="1">kcat is 58.5 sec(-1) with oxamate as substrate. kcat is 35.5 sec(-1) with carbamoyl phosphate as substrate.</text>
    </kinetics>
    <phDependence>
        <text evidence="1">Optimum pH is 9.0 (PubMed:38888336). No enzyme activity is detected at pH 6.0 and 7.0 (PubMed:38888336). Activity increases in the pH range of 8.0-9.0 (PubMed:38888336).</text>
    </phDependence>
    <temperatureDependence>
        <text evidence="1">Optimum temperature is 30 degrees Celsius.</text>
    </temperatureDependence>
</comment>
<comment type="pathway">
    <text evidence="1">Nitrogen metabolism; (S)-allantoin degradation.</text>
</comment>
<comment type="subunit">
    <text evidence="1">The OXTCase is composed of 3 subunits, AllF, AllG and AllH.</text>
</comment>
<comment type="disruption phenotype">
    <text evidence="1">The deletion mutant cannot produce oxamate during anaerobic allantoin degradation (PubMed:38888336). However, the levels of oxalate, produced via a glyoxylate shunt, significantly increase (PubMed:38888336).</text>
</comment>
<comment type="miscellaneous">
    <text evidence="1">Oxalurate could not be used as a standard substance due to its unavailability, and the enzyme reaction was performed in the reverse direction: the synthesis of oxalurate from oxamate and carbamoyl phosphate.</text>
</comment>
<comment type="similarity">
    <text evidence="3">Belongs to the AllG family.</text>
</comment>
<gene>
    <name evidence="2" type="primary">allG</name>
    <name type="synonym">ylbE</name>
    <name type="ordered locus">b4572</name>
    <name type="ORF">b0519</name>
</gene>
<name>ALLG_ECOLI</name>
<accession>P77129</accession>
<accession>P75714</accession>
<accession>V9HVX1</accession>
<dbReference type="EC" id="2.1.3.5" evidence="1"/>
<dbReference type="EMBL" id="U82664">
    <property type="protein sequence ID" value="AAB40271.1"/>
    <property type="molecule type" value="Genomic_DNA"/>
</dbReference>
<dbReference type="EMBL" id="U00096">
    <property type="protein sequence ID" value="ABD18638.2"/>
    <property type="molecule type" value="Genomic_DNA"/>
</dbReference>
<dbReference type="EMBL" id="D42020">
    <property type="status" value="NOT_ANNOTATED_CDS"/>
    <property type="molecule type" value="Genomic_DNA"/>
</dbReference>
<dbReference type="PIR" id="F64783">
    <property type="entry name" value="F64783"/>
</dbReference>
<dbReference type="RefSeq" id="WP_000495367.1">
    <property type="nucleotide sequence ID" value="NZ_SSZK01000024.1"/>
</dbReference>
<dbReference type="RefSeq" id="YP_009029994.1">
    <property type="nucleotide sequence ID" value="NC_000913.3"/>
</dbReference>
<dbReference type="SMR" id="P77129"/>
<dbReference type="FunCoup" id="P77129">
    <property type="interactions" value="96"/>
</dbReference>
<dbReference type="IntAct" id="P77129">
    <property type="interactions" value="6"/>
</dbReference>
<dbReference type="STRING" id="511145.b4572"/>
<dbReference type="PaxDb" id="511145-b4572"/>
<dbReference type="EnsemblBacteria" id="ABD18638">
    <property type="protein sequence ID" value="ABD18638"/>
    <property type="gene ID" value="b4572"/>
</dbReference>
<dbReference type="GeneID" id="4056025"/>
<dbReference type="KEGG" id="eco:b4572"/>
<dbReference type="KEGG" id="ecoc:C3026_02545"/>
<dbReference type="PATRIC" id="fig|511145.12.peg.540"/>
<dbReference type="EchoBASE" id="EB3179"/>
<dbReference type="eggNOG" id="COG0074">
    <property type="taxonomic scope" value="Bacteria"/>
</dbReference>
<dbReference type="InParanoid" id="P77129"/>
<dbReference type="OMA" id="TGDRWFT"/>
<dbReference type="OrthoDB" id="6193532at2"/>
<dbReference type="PhylomeDB" id="P77129"/>
<dbReference type="BioCyc" id="EcoCyc:G6288-MONOMER"/>
<dbReference type="UniPathway" id="UPA00395"/>
<dbReference type="PRO" id="PR:P77129"/>
<dbReference type="Proteomes" id="UP000000625">
    <property type="component" value="Chromosome"/>
</dbReference>
<dbReference type="GO" id="GO:0016740">
    <property type="term" value="F:transferase activity"/>
    <property type="evidence" value="ECO:0007669"/>
    <property type="project" value="UniProtKB-KW"/>
</dbReference>
<dbReference type="Gene3D" id="1.10.10.660">
    <property type="entry name" value="conserved protein of unknown function from Enterococcus faecalis V583"/>
    <property type="match status" value="1"/>
</dbReference>
<dbReference type="Gene3D" id="3.90.1710.10">
    <property type="entry name" value="Enterococcus faecalis V583 domain"/>
    <property type="match status" value="1"/>
</dbReference>
<dbReference type="Gene3D" id="3.90.1700.10">
    <property type="entry name" value="v583 domain like"/>
    <property type="match status" value="1"/>
</dbReference>
<dbReference type="InterPro" id="IPR009499">
    <property type="entry name" value="AllG-like"/>
</dbReference>
<dbReference type="InterPro" id="IPR024033">
    <property type="entry name" value="OXTCase_su_AllG_h-dom"/>
</dbReference>
<dbReference type="Pfam" id="PF06545">
    <property type="entry name" value="AllG"/>
    <property type="match status" value="1"/>
</dbReference>
<feature type="chain" id="PRO_0000168645" description="Oxamate carbamoyltransferase subunit AllG">
    <location>
        <begin position="1"/>
        <end position="419"/>
    </location>
</feature>
<feature type="sequence conflict" description="In Ref. 3; D42020." evidence="3" ref="3">
    <original>L</original>
    <variation>H</variation>
    <location>
        <position position="222"/>
    </location>
</feature>
<keyword id="KW-0460">Magnesium</keyword>
<keyword id="KW-1185">Reference proteome</keyword>
<keyword id="KW-0808">Transferase</keyword>
<proteinExistence type="evidence at protein level"/>
<evidence type="ECO:0000269" key="1">
    <source>
    </source>
</evidence>
<evidence type="ECO:0000303" key="2">
    <source>
    </source>
</evidence>
<evidence type="ECO:0000305" key="3"/>
<evidence type="ECO:0000305" key="4">
    <source>
    </source>
</evidence>
<protein>
    <recommendedName>
        <fullName evidence="3">Oxamate carbamoyltransferase subunit AllG</fullName>
        <shortName evidence="3">OXTCase subunit AllG</shortName>
        <ecNumber evidence="1">2.1.3.5</ecNumber>
    </recommendedName>
    <alternativeName>
        <fullName evidence="2">Oxamic transcarbamylase subunit AllG</fullName>
    </alternativeName>
</protein>
<reference key="1">
    <citation type="submission" date="1997-01" db="EMBL/GenBank/DDBJ databases">
        <title>Sequence of minutes 4-25 of Escherichia coli.</title>
        <authorList>
            <person name="Chung E."/>
            <person name="Allen E."/>
            <person name="Araujo R."/>
            <person name="Aparicio A.M."/>
            <person name="Davis K."/>
            <person name="Duncan M."/>
            <person name="Federspiel N."/>
            <person name="Hyman R."/>
            <person name="Kalman S."/>
            <person name="Komp C."/>
            <person name="Kurdi O."/>
            <person name="Lew H."/>
            <person name="Lin D."/>
            <person name="Namath A."/>
            <person name="Oefner P."/>
            <person name="Roberts D."/>
            <person name="Schramm S."/>
            <person name="Davis R.W."/>
        </authorList>
    </citation>
    <scope>NUCLEOTIDE SEQUENCE [LARGE SCALE GENOMIC DNA]</scope>
    <source>
        <strain>K12 / MG1655 / ATCC 47076</strain>
    </source>
</reference>
<reference key="2">
    <citation type="journal article" date="1997" name="Science">
        <title>The complete genome sequence of Escherichia coli K-12.</title>
        <authorList>
            <person name="Blattner F.R."/>
            <person name="Plunkett G. III"/>
            <person name="Bloch C.A."/>
            <person name="Perna N.T."/>
            <person name="Burland V."/>
            <person name="Riley M."/>
            <person name="Collado-Vides J."/>
            <person name="Glasner J.D."/>
            <person name="Rode C.K."/>
            <person name="Mayhew G.F."/>
            <person name="Gregor J."/>
            <person name="Davis N.W."/>
            <person name="Kirkpatrick H.A."/>
            <person name="Goeden M.A."/>
            <person name="Rose D.J."/>
            <person name="Mau B."/>
            <person name="Shao Y."/>
        </authorList>
    </citation>
    <scope>NUCLEOTIDE SEQUENCE [LARGE SCALE GENOMIC DNA]</scope>
    <source>
        <strain>K12 / MG1655 / ATCC 47076</strain>
    </source>
</reference>
<reference key="3">
    <citation type="journal article" date="1995" name="Mol. Gen. Genet.">
        <title>A new Escherichia coli gene, fdrA, identified by suppression analysis of dominant negative FtsH mutations.</title>
        <authorList>
            <person name="Akiyama Y."/>
            <person name="Ito K."/>
        </authorList>
    </citation>
    <scope>NUCLEOTIDE SEQUENCE [GENOMIC DNA] OF 1-232</scope>
    <source>
        <strain>K12</strain>
    </source>
</reference>
<reference key="4">
    <citation type="journal article" date="2024" name="Appl. Environ. Microbiol.">
        <title>Oxamic transcarbamylase of Escherichia coli is encoded by the three genes allFGH (formerly fdrA, ylbE, and ylbF).</title>
        <authorList>
            <person name="Kim N.Y."/>
            <person name="Kim O.B."/>
        </authorList>
    </citation>
    <scope>FUNCTION</scope>
    <scope>CATALYTIC ACTIVITY</scope>
    <scope>COFACTOR</scope>
    <scope>BIOPHYSICOCHEMICAL PROPERTIES</scope>
    <scope>PATHWAY</scope>
    <scope>SUBUNIT</scope>
    <scope>DISRUPTION PHENOTYPE</scope>
    <source>
        <strain>K12 / MG1655 / ATCC 47076</strain>
    </source>
</reference>
<organism>
    <name type="scientific">Escherichia coli (strain K12)</name>
    <dbReference type="NCBI Taxonomy" id="83333"/>
    <lineage>
        <taxon>Bacteria</taxon>
        <taxon>Pseudomonadati</taxon>
        <taxon>Pseudomonadota</taxon>
        <taxon>Gammaproteobacteria</taxon>
        <taxon>Enterobacterales</taxon>
        <taxon>Enterobacteriaceae</taxon>
        <taxon>Escherichia</taxon>
    </lineage>
</organism>